<name>TGT_BACC1</name>
<reference key="1">
    <citation type="journal article" date="2004" name="Nucleic Acids Res.">
        <title>The genome sequence of Bacillus cereus ATCC 10987 reveals metabolic adaptations and a large plasmid related to Bacillus anthracis pXO1.</title>
        <authorList>
            <person name="Rasko D.A."/>
            <person name="Ravel J."/>
            <person name="Oekstad O.A."/>
            <person name="Helgason E."/>
            <person name="Cer R.Z."/>
            <person name="Jiang L."/>
            <person name="Shores K.A."/>
            <person name="Fouts D.E."/>
            <person name="Tourasse N.J."/>
            <person name="Angiuoli S.V."/>
            <person name="Kolonay J.F."/>
            <person name="Nelson W.C."/>
            <person name="Kolstoe A.-B."/>
            <person name="Fraser C.M."/>
            <person name="Read T.D."/>
        </authorList>
    </citation>
    <scope>NUCLEOTIDE SEQUENCE [LARGE SCALE GENOMIC DNA]</scope>
    <source>
        <strain>ATCC 10987 / NRS 248</strain>
    </source>
</reference>
<organism>
    <name type="scientific">Bacillus cereus (strain ATCC 10987 / NRS 248)</name>
    <dbReference type="NCBI Taxonomy" id="222523"/>
    <lineage>
        <taxon>Bacteria</taxon>
        <taxon>Bacillati</taxon>
        <taxon>Bacillota</taxon>
        <taxon>Bacilli</taxon>
        <taxon>Bacillales</taxon>
        <taxon>Bacillaceae</taxon>
        <taxon>Bacillus</taxon>
        <taxon>Bacillus cereus group</taxon>
    </lineage>
</organism>
<feature type="chain" id="PRO_0000135445" description="Queuine tRNA-ribosyltransferase">
    <location>
        <begin position="1"/>
        <end position="379"/>
    </location>
</feature>
<feature type="region of interest" description="RNA binding" evidence="1">
    <location>
        <begin position="249"/>
        <end position="255"/>
    </location>
</feature>
<feature type="region of interest" description="RNA binding; important for wobble base 34 recognition" evidence="1">
    <location>
        <begin position="273"/>
        <end position="277"/>
    </location>
</feature>
<feature type="active site" description="Proton acceptor" evidence="1">
    <location>
        <position position="94"/>
    </location>
</feature>
<feature type="active site" description="Nucleophile" evidence="1">
    <location>
        <position position="268"/>
    </location>
</feature>
<feature type="binding site" evidence="1">
    <location>
        <begin position="94"/>
        <end position="98"/>
    </location>
    <ligand>
        <name>substrate</name>
    </ligand>
</feature>
<feature type="binding site" evidence="1">
    <location>
        <position position="148"/>
    </location>
    <ligand>
        <name>substrate</name>
    </ligand>
</feature>
<feature type="binding site" evidence="1">
    <location>
        <position position="191"/>
    </location>
    <ligand>
        <name>substrate</name>
    </ligand>
</feature>
<feature type="binding site" evidence="1">
    <location>
        <position position="218"/>
    </location>
    <ligand>
        <name>substrate</name>
    </ligand>
</feature>
<feature type="binding site" evidence="1">
    <location>
        <position position="306"/>
    </location>
    <ligand>
        <name>Zn(2+)</name>
        <dbReference type="ChEBI" id="CHEBI:29105"/>
    </ligand>
</feature>
<feature type="binding site" evidence="1">
    <location>
        <position position="308"/>
    </location>
    <ligand>
        <name>Zn(2+)</name>
        <dbReference type="ChEBI" id="CHEBI:29105"/>
    </ligand>
</feature>
<feature type="binding site" evidence="1">
    <location>
        <position position="311"/>
    </location>
    <ligand>
        <name>Zn(2+)</name>
        <dbReference type="ChEBI" id="CHEBI:29105"/>
    </ligand>
</feature>
<feature type="binding site" evidence="1">
    <location>
        <position position="337"/>
    </location>
    <ligand>
        <name>Zn(2+)</name>
        <dbReference type="ChEBI" id="CHEBI:29105"/>
    </ligand>
</feature>
<sequence length="379" mass="43227">MTAIRYEFIKTCKQTGARLGRVHTPHGSFDTPTFMPVGTLATVKTMSPEELKAMDSGIILSNTYHLWLRPGHEIIREAGGLHKFMNWDRAILTDSGGFQVFSLSDFRRIEEEGVHFRNHLNGDKLFLSPEKAMEIQNALGSDIMMAFDECPPFPATFEYMKKSVERTSRWAERCLKAHERPQDQGLFGIVQGGEFEELRRQSAKDLVSMDFPGYAVGGLSVGEPKDIMNRVLEFTTPLLPDNKPRYLMGVGSPDSLIDGAIRGIDMFDCVLPTRIARNGTCMTSEGRLVVKNAKFARDFGPLDPNCDCYTCKNYSRAYIRHLMKCDETFGIRLTSYHNLHFLLNLMEQVRQAIREDRLGDFREEFFEQYGFNKPNAKNF</sequence>
<keyword id="KW-0328">Glycosyltransferase</keyword>
<keyword id="KW-0479">Metal-binding</keyword>
<keyword id="KW-0671">Queuosine biosynthesis</keyword>
<keyword id="KW-0808">Transferase</keyword>
<keyword id="KW-0819">tRNA processing</keyword>
<keyword id="KW-0862">Zinc</keyword>
<evidence type="ECO:0000255" key="1">
    <source>
        <dbReference type="HAMAP-Rule" id="MF_00168"/>
    </source>
</evidence>
<dbReference type="EC" id="2.4.2.29" evidence="1"/>
<dbReference type="EMBL" id="AE017194">
    <property type="protein sequence ID" value="AAS43403.1"/>
    <property type="molecule type" value="Genomic_DNA"/>
</dbReference>
<dbReference type="SMR" id="Q730B4"/>
<dbReference type="KEGG" id="bca:BCE_4502"/>
<dbReference type="HOGENOM" id="CLU_022060_0_1_9"/>
<dbReference type="UniPathway" id="UPA00392"/>
<dbReference type="Proteomes" id="UP000002527">
    <property type="component" value="Chromosome"/>
</dbReference>
<dbReference type="GO" id="GO:0005829">
    <property type="term" value="C:cytosol"/>
    <property type="evidence" value="ECO:0007669"/>
    <property type="project" value="TreeGrafter"/>
</dbReference>
<dbReference type="GO" id="GO:0046872">
    <property type="term" value="F:metal ion binding"/>
    <property type="evidence" value="ECO:0007669"/>
    <property type="project" value="UniProtKB-KW"/>
</dbReference>
<dbReference type="GO" id="GO:0008479">
    <property type="term" value="F:tRNA-guanosine(34) queuine transglycosylase activity"/>
    <property type="evidence" value="ECO:0007669"/>
    <property type="project" value="UniProtKB-UniRule"/>
</dbReference>
<dbReference type="GO" id="GO:0008616">
    <property type="term" value="P:queuosine biosynthetic process"/>
    <property type="evidence" value="ECO:0007669"/>
    <property type="project" value="UniProtKB-UniRule"/>
</dbReference>
<dbReference type="GO" id="GO:0002099">
    <property type="term" value="P:tRNA wobble guanine modification"/>
    <property type="evidence" value="ECO:0007669"/>
    <property type="project" value="TreeGrafter"/>
</dbReference>
<dbReference type="GO" id="GO:0101030">
    <property type="term" value="P:tRNA-guanine transglycosylation"/>
    <property type="evidence" value="ECO:0007669"/>
    <property type="project" value="InterPro"/>
</dbReference>
<dbReference type="FunFam" id="3.20.20.105:FF:000001">
    <property type="entry name" value="Queuine tRNA-ribosyltransferase"/>
    <property type="match status" value="1"/>
</dbReference>
<dbReference type="Gene3D" id="3.20.20.105">
    <property type="entry name" value="Queuine tRNA-ribosyltransferase-like"/>
    <property type="match status" value="1"/>
</dbReference>
<dbReference type="HAMAP" id="MF_00168">
    <property type="entry name" value="Q_tRNA_Tgt"/>
    <property type="match status" value="1"/>
</dbReference>
<dbReference type="InterPro" id="IPR050076">
    <property type="entry name" value="ArchSynthase1/Queuine_TRR"/>
</dbReference>
<dbReference type="InterPro" id="IPR004803">
    <property type="entry name" value="TGT"/>
</dbReference>
<dbReference type="InterPro" id="IPR036511">
    <property type="entry name" value="TGT-like_sf"/>
</dbReference>
<dbReference type="InterPro" id="IPR002616">
    <property type="entry name" value="tRNA_ribo_trans-like"/>
</dbReference>
<dbReference type="NCBIfam" id="TIGR00430">
    <property type="entry name" value="Q_tRNA_tgt"/>
    <property type="match status" value="1"/>
</dbReference>
<dbReference type="NCBIfam" id="TIGR00449">
    <property type="entry name" value="tgt_general"/>
    <property type="match status" value="1"/>
</dbReference>
<dbReference type="PANTHER" id="PTHR46499">
    <property type="entry name" value="QUEUINE TRNA-RIBOSYLTRANSFERASE"/>
    <property type="match status" value="1"/>
</dbReference>
<dbReference type="PANTHER" id="PTHR46499:SF1">
    <property type="entry name" value="QUEUINE TRNA-RIBOSYLTRANSFERASE"/>
    <property type="match status" value="1"/>
</dbReference>
<dbReference type="Pfam" id="PF01702">
    <property type="entry name" value="TGT"/>
    <property type="match status" value="1"/>
</dbReference>
<dbReference type="SUPFAM" id="SSF51713">
    <property type="entry name" value="tRNA-guanine transglycosylase"/>
    <property type="match status" value="1"/>
</dbReference>
<proteinExistence type="inferred from homology"/>
<comment type="function">
    <text evidence="1">Catalyzes the base-exchange of a guanine (G) residue with the queuine precursor 7-aminomethyl-7-deazaguanine (PreQ1) at position 34 (anticodon wobble position) in tRNAs with GU(N) anticodons (tRNA-Asp, -Asn, -His and -Tyr). Catalysis occurs through a double-displacement mechanism. The nucleophile active site attacks the C1' of nucleotide 34 to detach the guanine base from the RNA, forming a covalent enzyme-RNA intermediate. The proton acceptor active site deprotonates the incoming PreQ1, allowing a nucleophilic attack on the C1' of the ribose to form the product. After dissociation, two additional enzymatic reactions on the tRNA convert PreQ1 to queuine (Q), resulting in the hypermodified nucleoside queuosine (7-(((4,5-cis-dihydroxy-2-cyclopenten-1-yl)amino)methyl)-7-deazaguanosine).</text>
</comment>
<comment type="catalytic activity">
    <reaction evidence="1">
        <text>7-aminomethyl-7-carbaguanine + guanosine(34) in tRNA = 7-aminomethyl-7-carbaguanosine(34) in tRNA + guanine</text>
        <dbReference type="Rhea" id="RHEA:24104"/>
        <dbReference type="Rhea" id="RHEA-COMP:10341"/>
        <dbReference type="Rhea" id="RHEA-COMP:10342"/>
        <dbReference type="ChEBI" id="CHEBI:16235"/>
        <dbReference type="ChEBI" id="CHEBI:58703"/>
        <dbReference type="ChEBI" id="CHEBI:74269"/>
        <dbReference type="ChEBI" id="CHEBI:82833"/>
        <dbReference type="EC" id="2.4.2.29"/>
    </reaction>
</comment>
<comment type="cofactor">
    <cofactor evidence="1">
        <name>Zn(2+)</name>
        <dbReference type="ChEBI" id="CHEBI:29105"/>
    </cofactor>
    <text evidence="1">Binds 1 zinc ion per subunit.</text>
</comment>
<comment type="pathway">
    <text evidence="1">tRNA modification; tRNA-queuosine biosynthesis.</text>
</comment>
<comment type="subunit">
    <text evidence="1">Homodimer. Within each dimer, one monomer is responsible for RNA recognition and catalysis, while the other monomer binds to the replacement base PreQ1.</text>
</comment>
<comment type="similarity">
    <text evidence="1">Belongs to the queuine tRNA-ribosyltransferase family.</text>
</comment>
<accession>Q730B4</accession>
<gene>
    <name evidence="1" type="primary">tgt</name>
    <name type="ordered locus">BCE_4502</name>
</gene>
<protein>
    <recommendedName>
        <fullName evidence="1">Queuine tRNA-ribosyltransferase</fullName>
        <ecNumber evidence="1">2.4.2.29</ecNumber>
    </recommendedName>
    <alternativeName>
        <fullName evidence="1">Guanine insertion enzyme</fullName>
    </alternativeName>
    <alternativeName>
        <fullName evidence="1">tRNA-guanine transglycosylase</fullName>
    </alternativeName>
</protein>